<proteinExistence type="inferred from homology"/>
<feature type="signal peptide" evidence="2">
    <location>
        <begin position="1"/>
        <end position="22"/>
    </location>
</feature>
<feature type="chain" id="PRO_0000454002" description="Proapolipoprotein C-II">
    <location>
        <begin position="23"/>
        <end position="100"/>
    </location>
</feature>
<feature type="chain" id="PRO_0000454003" description="Apolipoprotein C-II" evidence="1">
    <location>
        <begin position="29"/>
        <end position="100"/>
    </location>
</feature>
<feature type="region of interest" description="Lipid binding" evidence="1">
    <location>
        <begin position="66"/>
        <end position="74"/>
    </location>
</feature>
<feature type="region of interest" description="Lipoprotein lipase cofactor" evidence="1">
    <location>
        <begin position="78"/>
        <end position="100"/>
    </location>
</feature>
<comment type="function">
    <text evidence="1">Component of chylomicrons, very low-density lipoproteins (VLDL), low-density lipoproteins (LDL), and high-density lipoproteins (HDL) in plasma. Plays an important role in lipoprotein metabolism as an activator of lipoprotein lipase.</text>
</comment>
<comment type="subcellular location">
    <subcellularLocation>
        <location evidence="1">Secreted</location>
    </subcellularLocation>
</comment>
<comment type="PTM">
    <text evidence="1">Proapolipoprotein C-II is synthesized as a sialic acid containing glycoprotein which is subsequently desialylated prior to its proteolytic processing.</text>
</comment>
<comment type="PTM">
    <text evidence="1">Proapolipoprotein C-II, the major form found in plasma undergoes proteolytic cleavage of its N-terminal hexapeptide to generate the mature form apolipoprotein C-II, which occurs as the minor form in plasma.</text>
</comment>
<comment type="similarity">
    <text evidence="3">Belongs to the apolipoprotein C2 family.</text>
</comment>
<keyword id="KW-0162">Chylomicron</keyword>
<keyword id="KW-0345">HDL</keyword>
<keyword id="KW-0427">LDL</keyword>
<keyword id="KW-0442">Lipid degradation</keyword>
<keyword id="KW-0443">Lipid metabolism</keyword>
<keyword id="KW-0445">Lipid transport</keyword>
<keyword id="KW-0964">Secreted</keyword>
<keyword id="KW-0732">Signal</keyword>
<keyword id="KW-0813">Transport</keyword>
<keyword id="KW-0850">VLDL</keyword>
<evidence type="ECO:0000250" key="1">
    <source>
        <dbReference type="UniProtKB" id="P02655"/>
    </source>
</evidence>
<evidence type="ECO:0000255" key="2"/>
<evidence type="ECO:0000305" key="3"/>
<accession>P0DUY1</accession>
<sequence length="100" mass="11113">MDSRFLLALFLVLLVLGCEVQAAQQLQQDDPGSPALLGKVQESISSYWDTAKAAAQDLYQRTYLTSVDEKLRDMYSKSSAAMTTYAIIFTDQILTLLKGE</sequence>
<dbReference type="EMBL" id="MULK01015774">
    <property type="status" value="NOT_ANNOTATED_CDS"/>
    <property type="molecule type" value="Genomic_DNA"/>
</dbReference>
<dbReference type="SMR" id="P0DUY1"/>
<dbReference type="GO" id="GO:0042627">
    <property type="term" value="C:chylomicron"/>
    <property type="evidence" value="ECO:0007669"/>
    <property type="project" value="UniProtKB-KW"/>
</dbReference>
<dbReference type="GO" id="GO:0034364">
    <property type="term" value="C:high-density lipoprotein particle"/>
    <property type="evidence" value="ECO:0007669"/>
    <property type="project" value="UniProtKB-KW"/>
</dbReference>
<dbReference type="GO" id="GO:0034362">
    <property type="term" value="C:low-density lipoprotein particle"/>
    <property type="evidence" value="ECO:0007669"/>
    <property type="project" value="UniProtKB-KW"/>
</dbReference>
<dbReference type="GO" id="GO:0034361">
    <property type="term" value="C:very-low-density lipoprotein particle"/>
    <property type="evidence" value="ECO:0007669"/>
    <property type="project" value="UniProtKB-KW"/>
</dbReference>
<dbReference type="GO" id="GO:0016004">
    <property type="term" value="F:phospholipase activator activity"/>
    <property type="evidence" value="ECO:0007669"/>
    <property type="project" value="TreeGrafter"/>
</dbReference>
<dbReference type="GO" id="GO:0043274">
    <property type="term" value="F:phospholipase binding"/>
    <property type="evidence" value="ECO:0007669"/>
    <property type="project" value="TreeGrafter"/>
</dbReference>
<dbReference type="GO" id="GO:0016042">
    <property type="term" value="P:lipid catabolic process"/>
    <property type="evidence" value="ECO:0007669"/>
    <property type="project" value="UniProtKB-KW"/>
</dbReference>
<dbReference type="GO" id="GO:0006869">
    <property type="term" value="P:lipid transport"/>
    <property type="evidence" value="ECO:0007669"/>
    <property type="project" value="UniProtKB-KW"/>
</dbReference>
<dbReference type="GO" id="GO:0060697">
    <property type="term" value="P:positive regulation of phospholipid catabolic process"/>
    <property type="evidence" value="ECO:0007669"/>
    <property type="project" value="TreeGrafter"/>
</dbReference>
<dbReference type="FunFam" id="1.10.1440.10:FF:000001">
    <property type="entry name" value="Apolipoprotein C-II"/>
    <property type="match status" value="1"/>
</dbReference>
<dbReference type="Gene3D" id="1.10.1440.10">
    <property type="entry name" value="Apolipoprotein C-II"/>
    <property type="match status" value="1"/>
</dbReference>
<dbReference type="InterPro" id="IPR008019">
    <property type="entry name" value="Apo-CII"/>
</dbReference>
<dbReference type="InterPro" id="IPR023121">
    <property type="entry name" value="ApoC-II_dom_sf"/>
</dbReference>
<dbReference type="PANTHER" id="PTHR16566">
    <property type="entry name" value="APOLIPOPROTEIN C-II"/>
    <property type="match status" value="1"/>
</dbReference>
<dbReference type="PANTHER" id="PTHR16566:SF0">
    <property type="entry name" value="APOLIPOPROTEIN C-II"/>
    <property type="match status" value="1"/>
</dbReference>
<dbReference type="Pfam" id="PF05355">
    <property type="entry name" value="Apo-CII"/>
    <property type="match status" value="1"/>
</dbReference>
<organism>
    <name type="scientific">Myodes glareolus</name>
    <name type="common">Bank vole</name>
    <name type="synonym">Clethrionomys glareolus</name>
    <dbReference type="NCBI Taxonomy" id="447135"/>
    <lineage>
        <taxon>Eukaryota</taxon>
        <taxon>Metazoa</taxon>
        <taxon>Chordata</taxon>
        <taxon>Craniata</taxon>
        <taxon>Vertebrata</taxon>
        <taxon>Euteleostomi</taxon>
        <taxon>Mammalia</taxon>
        <taxon>Eutheria</taxon>
        <taxon>Euarchontoglires</taxon>
        <taxon>Glires</taxon>
        <taxon>Rodentia</taxon>
        <taxon>Myomorpha</taxon>
        <taxon>Muroidea</taxon>
        <taxon>Cricetidae</taxon>
        <taxon>Arvicolinae</taxon>
        <taxon>Myodes</taxon>
    </lineage>
</organism>
<name>APOC2_MYOGA</name>
<gene>
    <name type="primary">APOC2</name>
</gene>
<protein>
    <recommendedName>
        <fullName>Apolipoprotein C-II</fullName>
        <shortName>Apo-CII</shortName>
        <shortName>ApoC-II</shortName>
    </recommendedName>
    <alternativeName>
        <fullName>Apolipoprotein C2</fullName>
    </alternativeName>
    <component>
        <recommendedName>
            <fullName>Proapolipoprotein C-II</fullName>
            <shortName>ProapoC-II</shortName>
        </recommendedName>
    </component>
</protein>
<reference key="1">
    <citation type="submission" date="2017-09" db="EMBL/GenBank/DDBJ databases">
        <title>Signatures of selection in the bank vole genome.</title>
        <authorList>
            <person name="Lundberg M."/>
        </authorList>
    </citation>
    <scope>NUCLEOTIDE SEQUENCE [LARGE SCALE GENOMIC DNA]</scope>
    <source>
        <tissue>Spleen</tissue>
    </source>
</reference>
<reference key="2">
    <citation type="unpublished observations" date="2021-07">
        <authorList>
            <person name="Puppione D.L."/>
        </authorList>
    </citation>
    <scope>IDENTIFICATION</scope>
</reference>